<accession>B1YE74</accession>
<evidence type="ECO:0000255" key="1">
    <source>
        <dbReference type="HAMAP-Rule" id="MF_01103"/>
    </source>
</evidence>
<evidence type="ECO:0000256" key="2">
    <source>
        <dbReference type="SAM" id="MobiDB-lite"/>
    </source>
</evidence>
<feature type="chain" id="PRO_1000137011" description="UPF0291 protein Exig_1097">
    <location>
        <begin position="1"/>
        <end position="78"/>
    </location>
</feature>
<feature type="region of interest" description="Disordered" evidence="2">
    <location>
        <begin position="57"/>
        <end position="78"/>
    </location>
</feature>
<feature type="compositionally biased region" description="Basic and acidic residues" evidence="2">
    <location>
        <begin position="63"/>
        <end position="78"/>
    </location>
</feature>
<sequence length="78" mass="8999">MLSQEQLDRINELANKSKVEPLTDAETAEQKELRTAYLEAFRGSFKNQMMGIKIVDEEGTDVTPEKLKQAQEEERNKQ</sequence>
<dbReference type="EMBL" id="CP001022">
    <property type="protein sequence ID" value="ACB60576.1"/>
    <property type="molecule type" value="Genomic_DNA"/>
</dbReference>
<dbReference type="RefSeq" id="WP_012369999.1">
    <property type="nucleotide sequence ID" value="NC_010556.1"/>
</dbReference>
<dbReference type="SMR" id="B1YE74"/>
<dbReference type="STRING" id="262543.Exig_1097"/>
<dbReference type="KEGG" id="esi:Exig_1097"/>
<dbReference type="eggNOG" id="COG4224">
    <property type="taxonomic scope" value="Bacteria"/>
</dbReference>
<dbReference type="HOGENOM" id="CLU_173137_0_2_9"/>
<dbReference type="OrthoDB" id="390105at2"/>
<dbReference type="Proteomes" id="UP000001681">
    <property type="component" value="Chromosome"/>
</dbReference>
<dbReference type="GO" id="GO:0005737">
    <property type="term" value="C:cytoplasm"/>
    <property type="evidence" value="ECO:0007669"/>
    <property type="project" value="UniProtKB-SubCell"/>
</dbReference>
<dbReference type="Gene3D" id="1.10.287.540">
    <property type="entry name" value="Helix hairpin bin"/>
    <property type="match status" value="1"/>
</dbReference>
<dbReference type="HAMAP" id="MF_01103">
    <property type="entry name" value="UPF0291"/>
    <property type="match status" value="1"/>
</dbReference>
<dbReference type="InterPro" id="IPR009242">
    <property type="entry name" value="DUF896"/>
</dbReference>
<dbReference type="PANTHER" id="PTHR37300:SF2">
    <property type="entry name" value="UPF0291 PROTEIN BC_1827"/>
    <property type="match status" value="1"/>
</dbReference>
<dbReference type="PANTHER" id="PTHR37300">
    <property type="entry name" value="UPF0291 PROTEIN CBO2609/CLC_2481"/>
    <property type="match status" value="1"/>
</dbReference>
<dbReference type="Pfam" id="PF05979">
    <property type="entry name" value="DUF896"/>
    <property type="match status" value="1"/>
</dbReference>
<dbReference type="SUPFAM" id="SSF158221">
    <property type="entry name" value="YnzC-like"/>
    <property type="match status" value="1"/>
</dbReference>
<gene>
    <name type="ordered locus">Exig_1097</name>
</gene>
<proteinExistence type="inferred from homology"/>
<comment type="subcellular location">
    <subcellularLocation>
        <location evidence="1">Cytoplasm</location>
    </subcellularLocation>
</comment>
<comment type="similarity">
    <text evidence="1">Belongs to the UPF0291 family.</text>
</comment>
<reference key="1">
    <citation type="submission" date="2008-04" db="EMBL/GenBank/DDBJ databases">
        <title>Complete sequence of chromosome of Exiguobacterium sibiricum 255-15.</title>
        <authorList>
            <consortium name="US DOE Joint Genome Institute"/>
            <person name="Copeland A."/>
            <person name="Lucas S."/>
            <person name="Lapidus A."/>
            <person name="Glavina del Rio T."/>
            <person name="Dalin E."/>
            <person name="Tice H."/>
            <person name="Bruce D."/>
            <person name="Goodwin L."/>
            <person name="Pitluck S."/>
            <person name="Kiss H."/>
            <person name="Chertkov O."/>
            <person name="Monk C."/>
            <person name="Brettin T."/>
            <person name="Detter J.C."/>
            <person name="Han C."/>
            <person name="Kuske C.R."/>
            <person name="Schmutz J."/>
            <person name="Larimer F."/>
            <person name="Land M."/>
            <person name="Hauser L."/>
            <person name="Kyrpides N."/>
            <person name="Mikhailova N."/>
            <person name="Vishnivetskaya T."/>
            <person name="Rodrigues D.F."/>
            <person name="Gilichinsky D."/>
            <person name="Tiedje J."/>
            <person name="Richardson P."/>
        </authorList>
    </citation>
    <scope>NUCLEOTIDE SEQUENCE [LARGE SCALE GENOMIC DNA]</scope>
    <source>
        <strain>DSM 17290 / CCUG 55495 / CIP 109462 / JCM 13490 / 255-15</strain>
    </source>
</reference>
<name>Y1097_EXIS2</name>
<keyword id="KW-0963">Cytoplasm</keyword>
<keyword id="KW-1185">Reference proteome</keyword>
<organism>
    <name type="scientific">Exiguobacterium sibiricum (strain DSM 17290 / CCUG 55495 / CIP 109462 / JCM 13490 / 255-15)</name>
    <dbReference type="NCBI Taxonomy" id="262543"/>
    <lineage>
        <taxon>Bacteria</taxon>
        <taxon>Bacillati</taxon>
        <taxon>Bacillota</taxon>
        <taxon>Bacilli</taxon>
        <taxon>Bacillales</taxon>
        <taxon>Bacillales Family XII. Incertae Sedis</taxon>
        <taxon>Exiguobacterium</taxon>
    </lineage>
</organism>
<protein>
    <recommendedName>
        <fullName evidence="1">UPF0291 protein Exig_1097</fullName>
    </recommendedName>
</protein>